<accession>Q1R620</accession>
<feature type="chain" id="PRO_1000052732" description="Large ribosomal subunit protein uL5">
    <location>
        <begin position="1"/>
        <end position="179"/>
    </location>
</feature>
<feature type="modified residue" description="N6-acetyllysine" evidence="1">
    <location>
        <position position="3"/>
    </location>
</feature>
<protein>
    <recommendedName>
        <fullName evidence="1">Large ribosomal subunit protein uL5</fullName>
    </recommendedName>
    <alternativeName>
        <fullName evidence="2">50S ribosomal protein L5</fullName>
    </alternativeName>
</protein>
<keyword id="KW-0007">Acetylation</keyword>
<keyword id="KW-0687">Ribonucleoprotein</keyword>
<keyword id="KW-0689">Ribosomal protein</keyword>
<keyword id="KW-0694">RNA-binding</keyword>
<keyword id="KW-0699">rRNA-binding</keyword>
<keyword id="KW-0820">tRNA-binding</keyword>
<dbReference type="EMBL" id="CP000243">
    <property type="protein sequence ID" value="ABE09194.1"/>
    <property type="molecule type" value="Genomic_DNA"/>
</dbReference>
<dbReference type="RefSeq" id="WP_001096200.1">
    <property type="nucleotide sequence ID" value="NZ_CP064825.1"/>
</dbReference>
<dbReference type="SMR" id="Q1R620"/>
<dbReference type="GeneID" id="93778679"/>
<dbReference type="KEGG" id="eci:UTI89_C3757"/>
<dbReference type="HOGENOM" id="CLU_061015_2_1_6"/>
<dbReference type="Proteomes" id="UP000001952">
    <property type="component" value="Chromosome"/>
</dbReference>
<dbReference type="GO" id="GO:1990904">
    <property type="term" value="C:ribonucleoprotein complex"/>
    <property type="evidence" value="ECO:0007669"/>
    <property type="project" value="UniProtKB-KW"/>
</dbReference>
<dbReference type="GO" id="GO:0005840">
    <property type="term" value="C:ribosome"/>
    <property type="evidence" value="ECO:0007669"/>
    <property type="project" value="UniProtKB-KW"/>
</dbReference>
<dbReference type="GO" id="GO:0019843">
    <property type="term" value="F:rRNA binding"/>
    <property type="evidence" value="ECO:0007669"/>
    <property type="project" value="UniProtKB-UniRule"/>
</dbReference>
<dbReference type="GO" id="GO:0003735">
    <property type="term" value="F:structural constituent of ribosome"/>
    <property type="evidence" value="ECO:0007669"/>
    <property type="project" value="InterPro"/>
</dbReference>
<dbReference type="GO" id="GO:0000049">
    <property type="term" value="F:tRNA binding"/>
    <property type="evidence" value="ECO:0007669"/>
    <property type="project" value="UniProtKB-UniRule"/>
</dbReference>
<dbReference type="GO" id="GO:0006412">
    <property type="term" value="P:translation"/>
    <property type="evidence" value="ECO:0007669"/>
    <property type="project" value="UniProtKB-UniRule"/>
</dbReference>
<dbReference type="FunFam" id="3.30.1440.10:FF:000001">
    <property type="entry name" value="50S ribosomal protein L5"/>
    <property type="match status" value="1"/>
</dbReference>
<dbReference type="Gene3D" id="3.30.1440.10">
    <property type="match status" value="1"/>
</dbReference>
<dbReference type="HAMAP" id="MF_01333_B">
    <property type="entry name" value="Ribosomal_uL5_B"/>
    <property type="match status" value="1"/>
</dbReference>
<dbReference type="InterPro" id="IPR002132">
    <property type="entry name" value="Ribosomal_uL5"/>
</dbReference>
<dbReference type="InterPro" id="IPR020930">
    <property type="entry name" value="Ribosomal_uL5_bac-type"/>
</dbReference>
<dbReference type="InterPro" id="IPR031309">
    <property type="entry name" value="Ribosomal_uL5_C"/>
</dbReference>
<dbReference type="InterPro" id="IPR020929">
    <property type="entry name" value="Ribosomal_uL5_CS"/>
</dbReference>
<dbReference type="InterPro" id="IPR022803">
    <property type="entry name" value="Ribosomal_uL5_dom_sf"/>
</dbReference>
<dbReference type="InterPro" id="IPR031310">
    <property type="entry name" value="Ribosomal_uL5_N"/>
</dbReference>
<dbReference type="NCBIfam" id="NF000585">
    <property type="entry name" value="PRK00010.1"/>
    <property type="match status" value="1"/>
</dbReference>
<dbReference type="PANTHER" id="PTHR11994">
    <property type="entry name" value="60S RIBOSOMAL PROTEIN L11-RELATED"/>
    <property type="match status" value="1"/>
</dbReference>
<dbReference type="Pfam" id="PF00281">
    <property type="entry name" value="Ribosomal_L5"/>
    <property type="match status" value="1"/>
</dbReference>
<dbReference type="Pfam" id="PF00673">
    <property type="entry name" value="Ribosomal_L5_C"/>
    <property type="match status" value="1"/>
</dbReference>
<dbReference type="PIRSF" id="PIRSF002161">
    <property type="entry name" value="Ribosomal_L5"/>
    <property type="match status" value="1"/>
</dbReference>
<dbReference type="SUPFAM" id="SSF55282">
    <property type="entry name" value="RL5-like"/>
    <property type="match status" value="1"/>
</dbReference>
<dbReference type="PROSITE" id="PS00358">
    <property type="entry name" value="RIBOSOMAL_L5"/>
    <property type="match status" value="1"/>
</dbReference>
<name>RL5_ECOUT</name>
<proteinExistence type="inferred from homology"/>
<comment type="function">
    <text evidence="1">This is one of the proteins that bind and probably mediate the attachment of the 5S RNA into the large ribosomal subunit, where it forms part of the central protuberance. In the 70S ribosome it contacts protein S13 of the 30S subunit (bridge B1b), connecting the 2 subunits; this bridge is implicated in subunit movement. Contacts the P site tRNA; the 5S rRNA and some of its associated proteins might help stabilize positioning of ribosome-bound tRNAs.</text>
</comment>
<comment type="subunit">
    <text evidence="1">Part of the 50S ribosomal subunit; part of the 5S rRNA/L5/L18/L25 subcomplex. Contacts the 5S rRNA and the P site tRNA. Forms a bridge to the 30S subunit in the 70S ribosome.</text>
</comment>
<comment type="similarity">
    <text evidence="1">Belongs to the universal ribosomal protein uL5 family.</text>
</comment>
<sequence length="179" mass="20302">MAKLHDYYKDEVVKKLMTEFNYNSVMQVPRVEKITLNMGVGEAIADKKLLDNAAADLAAISGQKPLITKARKSVAGFKIRQGYPIGCKVTLRGERMWEFFERLITIAVPRIRDFRGLSAKSFDGRGNYSMGVREQIIFPEIDYDKVDRVRGLDITITTTAKSDEEGRALLAAFDFPFRK</sequence>
<organism>
    <name type="scientific">Escherichia coli (strain UTI89 / UPEC)</name>
    <dbReference type="NCBI Taxonomy" id="364106"/>
    <lineage>
        <taxon>Bacteria</taxon>
        <taxon>Pseudomonadati</taxon>
        <taxon>Pseudomonadota</taxon>
        <taxon>Gammaproteobacteria</taxon>
        <taxon>Enterobacterales</taxon>
        <taxon>Enterobacteriaceae</taxon>
        <taxon>Escherichia</taxon>
    </lineage>
</organism>
<gene>
    <name evidence="1" type="primary">rplE</name>
    <name type="ordered locus">UTI89_C3757</name>
</gene>
<reference key="1">
    <citation type="journal article" date="2006" name="Proc. Natl. Acad. Sci. U.S.A.">
        <title>Identification of genes subject to positive selection in uropathogenic strains of Escherichia coli: a comparative genomics approach.</title>
        <authorList>
            <person name="Chen S.L."/>
            <person name="Hung C.-S."/>
            <person name="Xu J."/>
            <person name="Reigstad C.S."/>
            <person name="Magrini V."/>
            <person name="Sabo A."/>
            <person name="Blasiar D."/>
            <person name="Bieri T."/>
            <person name="Meyer R.R."/>
            <person name="Ozersky P."/>
            <person name="Armstrong J.R."/>
            <person name="Fulton R.S."/>
            <person name="Latreille J.P."/>
            <person name="Spieth J."/>
            <person name="Hooton T.M."/>
            <person name="Mardis E.R."/>
            <person name="Hultgren S.J."/>
            <person name="Gordon J.I."/>
        </authorList>
    </citation>
    <scope>NUCLEOTIDE SEQUENCE [LARGE SCALE GENOMIC DNA]</scope>
    <source>
        <strain>UTI89 / UPEC</strain>
    </source>
</reference>
<evidence type="ECO:0000255" key="1">
    <source>
        <dbReference type="HAMAP-Rule" id="MF_01333"/>
    </source>
</evidence>
<evidence type="ECO:0000305" key="2"/>